<sequence length="46" mass="5521">MQVLNSLRNAKQRHPDCQIVKRKGRLYVICKTNPRFKAVQGRKKRR</sequence>
<feature type="chain" id="PRO_1000078484" description="Large ribosomal subunit protein bL36">
    <location>
        <begin position="1"/>
        <end position="46"/>
    </location>
</feature>
<organism>
    <name type="scientific">Salmonella paratyphi B (strain ATCC BAA-1250 / SPB7)</name>
    <dbReference type="NCBI Taxonomy" id="1016998"/>
    <lineage>
        <taxon>Bacteria</taxon>
        <taxon>Pseudomonadati</taxon>
        <taxon>Pseudomonadota</taxon>
        <taxon>Gammaproteobacteria</taxon>
        <taxon>Enterobacterales</taxon>
        <taxon>Enterobacteriaceae</taxon>
        <taxon>Salmonella</taxon>
    </lineage>
</organism>
<name>RL36_SALPB</name>
<comment type="similarity">
    <text evidence="1">Belongs to the bacterial ribosomal protein bL36 family.</text>
</comment>
<protein>
    <recommendedName>
        <fullName evidence="1">Large ribosomal subunit protein bL36</fullName>
    </recommendedName>
    <alternativeName>
        <fullName evidence="2">50S ribosomal protein L36</fullName>
    </alternativeName>
</protein>
<evidence type="ECO:0000255" key="1">
    <source>
        <dbReference type="HAMAP-Rule" id="MF_00251"/>
    </source>
</evidence>
<evidence type="ECO:0000305" key="2"/>
<gene>
    <name evidence="1" type="primary">rpmJ</name>
    <name type="ordered locus">SPAB_03104</name>
</gene>
<proteinExistence type="inferred from homology"/>
<dbReference type="EMBL" id="CP000886">
    <property type="protein sequence ID" value="ABX68466.1"/>
    <property type="molecule type" value="Genomic_DNA"/>
</dbReference>
<dbReference type="SMR" id="A9MWA7"/>
<dbReference type="KEGG" id="spq:SPAB_03104"/>
<dbReference type="PATRIC" id="fig|1016998.12.peg.2929"/>
<dbReference type="HOGENOM" id="CLU_135723_3_1_6"/>
<dbReference type="BioCyc" id="SENT1016998:SPAB_RS12670-MONOMER"/>
<dbReference type="Proteomes" id="UP000008556">
    <property type="component" value="Chromosome"/>
</dbReference>
<dbReference type="GO" id="GO:1990904">
    <property type="term" value="C:ribonucleoprotein complex"/>
    <property type="evidence" value="ECO:0007669"/>
    <property type="project" value="UniProtKB-KW"/>
</dbReference>
<dbReference type="GO" id="GO:0005840">
    <property type="term" value="C:ribosome"/>
    <property type="evidence" value="ECO:0007669"/>
    <property type="project" value="UniProtKB-KW"/>
</dbReference>
<dbReference type="GO" id="GO:0003735">
    <property type="term" value="F:structural constituent of ribosome"/>
    <property type="evidence" value="ECO:0007669"/>
    <property type="project" value="InterPro"/>
</dbReference>
<dbReference type="GO" id="GO:0006412">
    <property type="term" value="P:translation"/>
    <property type="evidence" value="ECO:0007669"/>
    <property type="project" value="UniProtKB-UniRule"/>
</dbReference>
<dbReference type="HAMAP" id="MF_00251">
    <property type="entry name" value="Ribosomal_bL36"/>
    <property type="match status" value="1"/>
</dbReference>
<dbReference type="InterPro" id="IPR000473">
    <property type="entry name" value="Ribosomal_bL36"/>
</dbReference>
<dbReference type="InterPro" id="IPR035977">
    <property type="entry name" value="Ribosomal_bL36_sp"/>
</dbReference>
<dbReference type="InterPro" id="IPR047621">
    <property type="entry name" value="Ribosomal_L36_bact"/>
</dbReference>
<dbReference type="NCBIfam" id="NF002021">
    <property type="entry name" value="PRK00831.1"/>
    <property type="match status" value="1"/>
</dbReference>
<dbReference type="NCBIfam" id="TIGR01022">
    <property type="entry name" value="rpmJ_bact"/>
    <property type="match status" value="1"/>
</dbReference>
<dbReference type="PANTHER" id="PTHR47781">
    <property type="entry name" value="50S RIBOSOMAL PROTEIN L36 2"/>
    <property type="match status" value="1"/>
</dbReference>
<dbReference type="PANTHER" id="PTHR47781:SF1">
    <property type="entry name" value="LARGE RIBOSOMAL SUBUNIT PROTEIN BL36B"/>
    <property type="match status" value="1"/>
</dbReference>
<dbReference type="Pfam" id="PF00444">
    <property type="entry name" value="Ribosomal_L36"/>
    <property type="match status" value="1"/>
</dbReference>
<dbReference type="SUPFAM" id="SSF57840">
    <property type="entry name" value="Ribosomal protein L36"/>
    <property type="match status" value="1"/>
</dbReference>
<dbReference type="PROSITE" id="PS00828">
    <property type="entry name" value="RIBOSOMAL_L36"/>
    <property type="match status" value="1"/>
</dbReference>
<reference key="1">
    <citation type="submission" date="2007-11" db="EMBL/GenBank/DDBJ databases">
        <authorList>
            <consortium name="The Salmonella enterica serovar Paratyphi B Genome Sequencing Project"/>
            <person name="McClelland M."/>
            <person name="Sanderson E.K."/>
            <person name="Porwollik S."/>
            <person name="Spieth J."/>
            <person name="Clifton W.S."/>
            <person name="Fulton R."/>
            <person name="Cordes M."/>
            <person name="Wollam A."/>
            <person name="Shah N."/>
            <person name="Pepin K."/>
            <person name="Bhonagiri V."/>
            <person name="Nash W."/>
            <person name="Johnson M."/>
            <person name="Thiruvilangam P."/>
            <person name="Wilson R."/>
        </authorList>
    </citation>
    <scope>NUCLEOTIDE SEQUENCE [LARGE SCALE GENOMIC DNA]</scope>
    <source>
        <strain>ATCC BAA-1250 / SPB7</strain>
    </source>
</reference>
<accession>A9MWA7</accession>
<keyword id="KW-0687">Ribonucleoprotein</keyword>
<keyword id="KW-0689">Ribosomal protein</keyword>